<comment type="catalytic activity">
    <reaction evidence="1">
        <text>CMP + ATP = CDP + ADP</text>
        <dbReference type="Rhea" id="RHEA:11600"/>
        <dbReference type="ChEBI" id="CHEBI:30616"/>
        <dbReference type="ChEBI" id="CHEBI:58069"/>
        <dbReference type="ChEBI" id="CHEBI:60377"/>
        <dbReference type="ChEBI" id="CHEBI:456216"/>
        <dbReference type="EC" id="2.7.4.25"/>
    </reaction>
</comment>
<comment type="catalytic activity">
    <reaction evidence="1">
        <text>dCMP + ATP = dCDP + ADP</text>
        <dbReference type="Rhea" id="RHEA:25094"/>
        <dbReference type="ChEBI" id="CHEBI:30616"/>
        <dbReference type="ChEBI" id="CHEBI:57566"/>
        <dbReference type="ChEBI" id="CHEBI:58593"/>
        <dbReference type="ChEBI" id="CHEBI:456216"/>
        <dbReference type="EC" id="2.7.4.25"/>
    </reaction>
</comment>
<comment type="subcellular location">
    <subcellularLocation>
        <location evidence="1">Cytoplasm</location>
    </subcellularLocation>
</comment>
<comment type="similarity">
    <text evidence="1">Belongs to the cytidylate kinase family. Type 1 subfamily.</text>
</comment>
<feature type="chain" id="PRO_0000131931" description="Cytidylate kinase">
    <location>
        <begin position="1"/>
        <end position="225"/>
    </location>
</feature>
<feature type="binding site" evidence="1">
    <location>
        <begin position="11"/>
        <end position="19"/>
    </location>
    <ligand>
        <name>ATP</name>
        <dbReference type="ChEBI" id="CHEBI:30616"/>
    </ligand>
</feature>
<name>KCY_MANSM</name>
<proteinExistence type="inferred from homology"/>
<gene>
    <name evidence="1" type="primary">cmk</name>
    <name type="ordered locus">MS1477</name>
</gene>
<protein>
    <recommendedName>
        <fullName evidence="1">Cytidylate kinase</fullName>
        <shortName evidence="1">CK</shortName>
        <ecNumber evidence="1">2.7.4.25</ecNumber>
    </recommendedName>
    <alternativeName>
        <fullName evidence="1">Cytidine monophosphate kinase</fullName>
        <shortName evidence="1">CMP kinase</shortName>
    </alternativeName>
</protein>
<accession>Q65SH6</accession>
<dbReference type="EC" id="2.7.4.25" evidence="1"/>
<dbReference type="EMBL" id="AE016827">
    <property type="protein sequence ID" value="AAU38084.1"/>
    <property type="molecule type" value="Genomic_DNA"/>
</dbReference>
<dbReference type="RefSeq" id="WP_011200650.1">
    <property type="nucleotide sequence ID" value="NC_006300.1"/>
</dbReference>
<dbReference type="SMR" id="Q65SH6"/>
<dbReference type="STRING" id="221988.MS1477"/>
<dbReference type="KEGG" id="msu:MS1477"/>
<dbReference type="eggNOG" id="COG0283">
    <property type="taxonomic scope" value="Bacteria"/>
</dbReference>
<dbReference type="HOGENOM" id="CLU_079959_0_2_6"/>
<dbReference type="OrthoDB" id="9807434at2"/>
<dbReference type="Proteomes" id="UP000000607">
    <property type="component" value="Chromosome"/>
</dbReference>
<dbReference type="GO" id="GO:0005829">
    <property type="term" value="C:cytosol"/>
    <property type="evidence" value="ECO:0007669"/>
    <property type="project" value="TreeGrafter"/>
</dbReference>
<dbReference type="GO" id="GO:0005524">
    <property type="term" value="F:ATP binding"/>
    <property type="evidence" value="ECO:0007669"/>
    <property type="project" value="UniProtKB-UniRule"/>
</dbReference>
<dbReference type="GO" id="GO:0036430">
    <property type="term" value="F:CMP kinase activity"/>
    <property type="evidence" value="ECO:0007669"/>
    <property type="project" value="RHEA"/>
</dbReference>
<dbReference type="GO" id="GO:0036431">
    <property type="term" value="F:dCMP kinase activity"/>
    <property type="evidence" value="ECO:0007669"/>
    <property type="project" value="RHEA"/>
</dbReference>
<dbReference type="GO" id="GO:0015949">
    <property type="term" value="P:nucleobase-containing small molecule interconversion"/>
    <property type="evidence" value="ECO:0007669"/>
    <property type="project" value="TreeGrafter"/>
</dbReference>
<dbReference type="GO" id="GO:0006220">
    <property type="term" value="P:pyrimidine nucleotide metabolic process"/>
    <property type="evidence" value="ECO:0007669"/>
    <property type="project" value="UniProtKB-UniRule"/>
</dbReference>
<dbReference type="CDD" id="cd02020">
    <property type="entry name" value="CMPK"/>
    <property type="match status" value="1"/>
</dbReference>
<dbReference type="FunFam" id="3.40.50.300:FF:000262">
    <property type="entry name" value="Cytidylate kinase"/>
    <property type="match status" value="1"/>
</dbReference>
<dbReference type="Gene3D" id="3.40.50.300">
    <property type="entry name" value="P-loop containing nucleotide triphosphate hydrolases"/>
    <property type="match status" value="1"/>
</dbReference>
<dbReference type="HAMAP" id="MF_00238">
    <property type="entry name" value="Cytidyl_kinase_type1"/>
    <property type="match status" value="1"/>
</dbReference>
<dbReference type="InterPro" id="IPR003136">
    <property type="entry name" value="Cytidylate_kin"/>
</dbReference>
<dbReference type="InterPro" id="IPR011994">
    <property type="entry name" value="Cytidylate_kinase_dom"/>
</dbReference>
<dbReference type="InterPro" id="IPR027417">
    <property type="entry name" value="P-loop_NTPase"/>
</dbReference>
<dbReference type="NCBIfam" id="TIGR00017">
    <property type="entry name" value="cmk"/>
    <property type="match status" value="1"/>
</dbReference>
<dbReference type="PANTHER" id="PTHR21299:SF2">
    <property type="entry name" value="CYTIDYLATE KINASE"/>
    <property type="match status" value="1"/>
</dbReference>
<dbReference type="PANTHER" id="PTHR21299">
    <property type="entry name" value="CYTIDYLATE KINASE/PANTOATE-BETA-ALANINE LIGASE"/>
    <property type="match status" value="1"/>
</dbReference>
<dbReference type="Pfam" id="PF02224">
    <property type="entry name" value="Cytidylate_kin"/>
    <property type="match status" value="1"/>
</dbReference>
<dbReference type="SUPFAM" id="SSF52540">
    <property type="entry name" value="P-loop containing nucleoside triphosphate hydrolases"/>
    <property type="match status" value="1"/>
</dbReference>
<evidence type="ECO:0000255" key="1">
    <source>
        <dbReference type="HAMAP-Rule" id="MF_00238"/>
    </source>
</evidence>
<organism>
    <name type="scientific">Mannheimia succiniciproducens (strain KCTC 0769BP / MBEL55E)</name>
    <dbReference type="NCBI Taxonomy" id="221988"/>
    <lineage>
        <taxon>Bacteria</taxon>
        <taxon>Pseudomonadati</taxon>
        <taxon>Pseudomonadota</taxon>
        <taxon>Gammaproteobacteria</taxon>
        <taxon>Pasteurellales</taxon>
        <taxon>Pasteurellaceae</taxon>
        <taxon>Basfia</taxon>
    </lineage>
</organism>
<reference key="1">
    <citation type="journal article" date="2004" name="Nat. Biotechnol.">
        <title>The genome sequence of the capnophilic rumen bacterium Mannheimia succiniciproducens.</title>
        <authorList>
            <person name="Hong S.H."/>
            <person name="Kim J.S."/>
            <person name="Lee S.Y."/>
            <person name="In Y.H."/>
            <person name="Choi S.S."/>
            <person name="Rih J.-K."/>
            <person name="Kim C.H."/>
            <person name="Jeong H."/>
            <person name="Hur C.G."/>
            <person name="Kim J.J."/>
        </authorList>
    </citation>
    <scope>NUCLEOTIDE SEQUENCE [LARGE SCALE GENOMIC DNA]</scope>
    <source>
        <strain>KCTC 0769BP / MBEL55E</strain>
    </source>
</reference>
<sequence>MTKNIVITVDGPSGAGKGTLCYALANRLGFALLDSGAIYRVTALAALQCKADLTNEAELAELAAHLDIEFLPEAGEVKVMLGGEDVSGLIRTQEVADAASKVAVFPQVRSALLQLQKDFATPKGLIADGRDMGTVVFPTAQVKLFLDASAEERAKRRFKQLQNKGISGNFDQILAEIKDRDFRDRNRPVAPLKPADDALLLDSTTLSIEEVIAQALSYIHQKVKI</sequence>
<keyword id="KW-0067">ATP-binding</keyword>
<keyword id="KW-0963">Cytoplasm</keyword>
<keyword id="KW-0418">Kinase</keyword>
<keyword id="KW-0547">Nucleotide-binding</keyword>
<keyword id="KW-0808">Transferase</keyword>